<comment type="subcellular location">
    <subcellularLocation>
        <location evidence="2">Secreted</location>
    </subcellularLocation>
</comment>
<comment type="similarity">
    <text evidence="2">Belongs to the peptidase S10 family.</text>
</comment>
<comment type="caution">
    <text evidence="2">Lacks the second part of the protein and the active site Asp and His residues which is a conserved feature of peptidase S10 family.</text>
</comment>
<comment type="caution">
    <text evidence="2">Could be the product of a pseudogene.</text>
</comment>
<organism>
    <name type="scientific">Arabidopsis thaliana</name>
    <name type="common">Mouse-ear cress</name>
    <dbReference type="NCBI Taxonomy" id="3702"/>
    <lineage>
        <taxon>Eukaryota</taxon>
        <taxon>Viridiplantae</taxon>
        <taxon>Streptophyta</taxon>
        <taxon>Embryophyta</taxon>
        <taxon>Tracheophyta</taxon>
        <taxon>Spermatophyta</taxon>
        <taxon>Magnoliopsida</taxon>
        <taxon>eudicotyledons</taxon>
        <taxon>Gunneridae</taxon>
        <taxon>Pentapetalae</taxon>
        <taxon>rosids</taxon>
        <taxon>malvids</taxon>
        <taxon>Brassicales</taxon>
        <taxon>Brassicaceae</taxon>
        <taxon>Camelineae</taxon>
        <taxon>Arabidopsis</taxon>
    </lineage>
</organism>
<feature type="signal peptide" evidence="1">
    <location>
        <begin position="1"/>
        <end position="25"/>
    </location>
</feature>
<feature type="chain" id="PRO_0000274668" description="Putative serine carboxypeptidase-like 54">
    <location>
        <begin position="26"/>
        <end position="190"/>
    </location>
</feature>
<feature type="glycosylation site" description="N-linked (GlcNAc...) asparagine" evidence="1">
    <location>
        <position position="58"/>
    </location>
</feature>
<feature type="glycosylation site" description="N-linked (GlcNAc...) asparagine" evidence="1">
    <location>
        <position position="59"/>
    </location>
</feature>
<feature type="glycosylation site" description="N-linked (GlcNAc...) asparagine" evidence="1">
    <location>
        <position position="105"/>
    </location>
</feature>
<gene>
    <name type="primary">SCPL54</name>
    <name type="ordered locus">At5g22960</name>
    <name type="ORF">MRN17.19</name>
</gene>
<dbReference type="EMBL" id="AB005243">
    <property type="protein sequence ID" value="BAB10617.1"/>
    <property type="molecule type" value="Genomic_DNA"/>
</dbReference>
<dbReference type="EMBL" id="CP002688">
    <property type="protein sequence ID" value="AED93101.1"/>
    <property type="molecule type" value="Genomic_DNA"/>
</dbReference>
<dbReference type="RefSeq" id="NP_197687.1">
    <property type="nucleotide sequence ID" value="NM_122202.1"/>
</dbReference>
<dbReference type="SMR" id="Q9FFB2"/>
<dbReference type="STRING" id="3702.Q9FFB2"/>
<dbReference type="MEROPS" id="S10.A69"/>
<dbReference type="GlyCosmos" id="Q9FFB2">
    <property type="glycosylation" value="3 sites, No reported glycans"/>
</dbReference>
<dbReference type="GlyGen" id="Q9FFB2">
    <property type="glycosylation" value="3 sites"/>
</dbReference>
<dbReference type="PaxDb" id="3702-AT5G22960.1"/>
<dbReference type="ProteomicsDB" id="232708"/>
<dbReference type="EnsemblPlants" id="AT5G22960.1">
    <property type="protein sequence ID" value="AT5G22960.1"/>
    <property type="gene ID" value="AT5G22960"/>
</dbReference>
<dbReference type="GeneID" id="832360"/>
<dbReference type="Gramene" id="AT5G22960.1">
    <property type="protein sequence ID" value="AT5G22960.1"/>
    <property type="gene ID" value="AT5G22960"/>
</dbReference>
<dbReference type="KEGG" id="ath:AT5G22960"/>
<dbReference type="Araport" id="AT5G22960"/>
<dbReference type="TAIR" id="AT5G22960"/>
<dbReference type="eggNOG" id="KOG1282">
    <property type="taxonomic scope" value="Eukaryota"/>
</dbReference>
<dbReference type="HOGENOM" id="CLU_1429860_0_0_1"/>
<dbReference type="InParanoid" id="Q9FFB2"/>
<dbReference type="PhylomeDB" id="Q9FFB2"/>
<dbReference type="Proteomes" id="UP000006548">
    <property type="component" value="Chromosome 5"/>
</dbReference>
<dbReference type="ExpressionAtlas" id="Q9FFB2">
    <property type="expression patterns" value="baseline and differential"/>
</dbReference>
<dbReference type="GO" id="GO:0005576">
    <property type="term" value="C:extracellular region"/>
    <property type="evidence" value="ECO:0007669"/>
    <property type="project" value="UniProtKB-SubCell"/>
</dbReference>
<dbReference type="GO" id="GO:0004185">
    <property type="term" value="F:serine-type carboxypeptidase activity"/>
    <property type="evidence" value="ECO:0007669"/>
    <property type="project" value="InterPro"/>
</dbReference>
<dbReference type="GO" id="GO:0006508">
    <property type="term" value="P:proteolysis"/>
    <property type="evidence" value="ECO:0007669"/>
    <property type="project" value="InterPro"/>
</dbReference>
<dbReference type="Gene3D" id="3.40.50.1820">
    <property type="entry name" value="alpha/beta hydrolase"/>
    <property type="match status" value="1"/>
</dbReference>
<dbReference type="InterPro" id="IPR029058">
    <property type="entry name" value="AB_hydrolase_fold"/>
</dbReference>
<dbReference type="InterPro" id="IPR001563">
    <property type="entry name" value="Peptidase_S10"/>
</dbReference>
<dbReference type="InterPro" id="IPR018202">
    <property type="entry name" value="Ser_caboxypep_ser_AS"/>
</dbReference>
<dbReference type="PANTHER" id="PTHR11802:SF259">
    <property type="entry name" value="SERINE CARBOXYPEPTIDASE-LIKE 48"/>
    <property type="match status" value="1"/>
</dbReference>
<dbReference type="PANTHER" id="PTHR11802">
    <property type="entry name" value="SERINE PROTEASE FAMILY S10 SERINE CARBOXYPEPTIDASE"/>
    <property type="match status" value="1"/>
</dbReference>
<dbReference type="Pfam" id="PF00450">
    <property type="entry name" value="Peptidase_S10"/>
    <property type="match status" value="2"/>
</dbReference>
<dbReference type="PRINTS" id="PR00724">
    <property type="entry name" value="CRBOXYPTASEC"/>
</dbReference>
<dbReference type="SUPFAM" id="SSF53474">
    <property type="entry name" value="alpha/beta-Hydrolases"/>
    <property type="match status" value="1"/>
</dbReference>
<dbReference type="PROSITE" id="PS00131">
    <property type="entry name" value="CARBOXYPEPT_SER_SER"/>
    <property type="match status" value="1"/>
</dbReference>
<name>SCP54_ARATH</name>
<sequence length="190" mass="21154">MATKTFSLPFLLIVCIFSQLSSTFGDPSVKDLGQHAGYFSLPRSKSARLFHFFFQSRNNSSDPVVIWLSGGPGCSSSNQRYISYLKISNLIYVDQPIRTGFSYANDSTDLRHDEDSVSNDLYDFLQAFFKEHPNLAKDDFYITGESYAGHYIPALASRVHNGNEKKEGIVINLKVTDISLVTATATWSAG</sequence>
<reference key="1">
    <citation type="journal article" date="1997" name="DNA Res.">
        <title>Structural analysis of Arabidopsis thaliana chromosome 5. I. Sequence features of the 1.6 Mb regions covered by twenty physically assigned P1 clones.</title>
        <authorList>
            <person name="Sato S."/>
            <person name="Kotani H."/>
            <person name="Nakamura Y."/>
            <person name="Kaneko T."/>
            <person name="Asamizu E."/>
            <person name="Fukami M."/>
            <person name="Miyajima N."/>
            <person name="Tabata S."/>
        </authorList>
    </citation>
    <scope>NUCLEOTIDE SEQUENCE [LARGE SCALE GENOMIC DNA]</scope>
    <source>
        <strain>cv. Columbia</strain>
    </source>
</reference>
<reference key="2">
    <citation type="journal article" date="2017" name="Plant J.">
        <title>Araport11: a complete reannotation of the Arabidopsis thaliana reference genome.</title>
        <authorList>
            <person name="Cheng C.Y."/>
            <person name="Krishnakumar V."/>
            <person name="Chan A.P."/>
            <person name="Thibaud-Nissen F."/>
            <person name="Schobel S."/>
            <person name="Town C.D."/>
        </authorList>
    </citation>
    <scope>GENOME REANNOTATION</scope>
    <source>
        <strain>cv. Columbia</strain>
    </source>
</reference>
<reference key="3">
    <citation type="journal article" date="2005" name="Plant Physiol.">
        <title>An expression and bioinformatics analysis of the Arabidopsis serine carboxypeptidase-like gene family.</title>
        <authorList>
            <person name="Fraser C.M."/>
            <person name="Rider L.W."/>
            <person name="Chapple C."/>
        </authorList>
    </citation>
    <scope>GENE FAMILY</scope>
    <scope>NOMENCLATURE</scope>
</reference>
<proteinExistence type="uncertain"/>
<protein>
    <recommendedName>
        <fullName>Putative serine carboxypeptidase-like 54</fullName>
    </recommendedName>
</protein>
<keyword id="KW-0325">Glycoprotein</keyword>
<keyword id="KW-1185">Reference proteome</keyword>
<keyword id="KW-0964">Secreted</keyword>
<keyword id="KW-0732">Signal</keyword>
<accession>Q9FFB2</accession>
<evidence type="ECO:0000255" key="1"/>
<evidence type="ECO:0000305" key="2"/>